<proteinExistence type="evidence at protein level"/>
<name>ALF_DROME</name>
<feature type="initiator methionine" description="Removed" evidence="3 5">
    <location>
        <position position="1"/>
    </location>
</feature>
<feature type="chain" id="PRO_0000216927" description="Fructose-bisphosphate aldolase">
    <location>
        <begin position="2"/>
        <end position="361"/>
    </location>
</feature>
<feature type="active site" description="Proton acceptor" evidence="1">
    <location>
        <position position="188"/>
    </location>
</feature>
<feature type="active site" description="Schiff-base intermediate with dihydroxyacetone-P">
    <location>
        <position position="230"/>
    </location>
</feature>
<feature type="binding site">
    <location>
        <position position="56"/>
    </location>
    <ligand>
        <name>substrate</name>
    </ligand>
</feature>
<feature type="binding site">
    <location>
        <position position="147"/>
    </location>
    <ligand>
        <name>substrate</name>
    </ligand>
</feature>
<feature type="site" description="Necessary for preference for fructose 1,6-bisphosphate over fructose 1-phosphate">
    <location>
        <position position="361"/>
    </location>
</feature>
<feature type="modified residue" description="N-acetylthreonine" evidence="3 5">
    <location>
        <position position="2"/>
    </location>
</feature>
<feature type="splice variant" id="VSP_000221" description="In isoform Beta." evidence="7">
    <original>GDAAQGKYVAGSAGAGSGSLFVANHAY</original>
    <variation>SQACQGIYVPGSIPSFAGNANLFVAQHKY</variation>
    <location>
        <begin position="335"/>
        <end position="361"/>
    </location>
</feature>
<feature type="splice variant" id="VSP_000223" description="In isoform Alpha." evidence="9">
    <original>DAAQGKYVAGSAGAGSGSLFVANHAY</original>
    <variation>EAACGNYTAGSVKGFAGKDTLHVDDHRY</variation>
    <location>
        <begin position="336"/>
        <end position="361"/>
    </location>
</feature>
<feature type="sequence conflict" description="In Ref. 1; BAA01236/BAA01237/BAA01238 and 4; BAA01592." evidence="11" ref="1 4">
    <original>M</original>
    <variation>H</variation>
    <location>
        <position position="40"/>
    </location>
</feature>
<feature type="sequence conflict" description="In Ref. 3; CAA42666/CAA42667." evidence="11" ref="3">
    <original>K</original>
    <variation>E</variation>
    <location>
        <position position="111"/>
    </location>
</feature>
<feature type="sequence conflict" description="In Ref. 1; BAA01236/BAA01237/BAA01238 and 4; BAA01592." evidence="11" ref="1 4">
    <original>Q</original>
    <variation>E</variation>
    <location>
        <position position="181"/>
    </location>
</feature>
<feature type="sequence conflict" description="In Ref. 3; CAA42666/CAA42667." evidence="11" ref="3">
    <original>R</original>
    <variation>G</variation>
    <location>
        <position position="201"/>
    </location>
</feature>
<feature type="sequence conflict" description="In Ref. 3; CAA42666/CAA42667." evidence="11" ref="3">
    <original>A</original>
    <variation>T</variation>
    <location>
        <position position="251"/>
    </location>
</feature>
<feature type="helix" evidence="15">
    <location>
        <begin position="10"/>
        <end position="23"/>
    </location>
</feature>
<feature type="strand" evidence="15">
    <location>
        <begin position="29"/>
        <end position="33"/>
    </location>
</feature>
<feature type="helix" evidence="15">
    <location>
        <begin position="37"/>
        <end position="46"/>
    </location>
</feature>
<feature type="helix" evidence="15">
    <location>
        <begin position="53"/>
        <end position="64"/>
    </location>
</feature>
<feature type="helix" evidence="15">
    <location>
        <begin position="68"/>
        <end position="72"/>
    </location>
</feature>
<feature type="strand" evidence="15">
    <location>
        <begin position="74"/>
        <end position="79"/>
    </location>
</feature>
<feature type="helix" evidence="15">
    <location>
        <begin position="81"/>
        <end position="84"/>
    </location>
</feature>
<feature type="helix" evidence="15">
    <location>
        <begin position="94"/>
        <end position="100"/>
    </location>
</feature>
<feature type="strand" evidence="15">
    <location>
        <begin position="104"/>
        <end position="108"/>
    </location>
</feature>
<feature type="strand" evidence="15">
    <location>
        <begin position="113"/>
        <end position="115"/>
    </location>
</feature>
<feature type="strand" evidence="15">
    <location>
        <begin position="119"/>
        <end position="121"/>
    </location>
</feature>
<feature type="strand" evidence="15">
    <location>
        <begin position="123"/>
        <end position="125"/>
    </location>
</feature>
<feature type="helix" evidence="15">
    <location>
        <begin position="131"/>
        <end position="140"/>
    </location>
</feature>
<feature type="strand" evidence="15">
    <location>
        <begin position="143"/>
        <end position="152"/>
    </location>
</feature>
<feature type="strand" evidence="15">
    <location>
        <begin position="155"/>
        <end position="157"/>
    </location>
</feature>
<feature type="helix" evidence="15">
    <location>
        <begin position="161"/>
        <end position="180"/>
    </location>
</feature>
<feature type="strand" evidence="15">
    <location>
        <begin position="184"/>
        <end position="191"/>
    </location>
</feature>
<feature type="helix" evidence="15">
    <location>
        <begin position="199"/>
        <end position="219"/>
    </location>
</feature>
<feature type="helix" evidence="15">
    <location>
        <begin position="224"/>
        <end position="226"/>
    </location>
</feature>
<feature type="helix" evidence="15">
    <location>
        <begin position="245"/>
        <end position="259"/>
    </location>
</feature>
<feature type="strand" evidence="15">
    <location>
        <begin position="266"/>
        <end position="269"/>
    </location>
</feature>
<feature type="helix" evidence="15">
    <location>
        <begin position="276"/>
        <end position="286"/>
    </location>
</feature>
<feature type="strand" evidence="15">
    <location>
        <begin position="295"/>
        <end position="302"/>
    </location>
</feature>
<feature type="helix" evidence="15">
    <location>
        <begin position="303"/>
        <end position="305"/>
    </location>
</feature>
<feature type="helix" evidence="15">
    <location>
        <begin position="307"/>
        <end position="313"/>
    </location>
</feature>
<feature type="helix" evidence="15">
    <location>
        <begin position="320"/>
        <end position="337"/>
    </location>
</feature>
<feature type="turn" evidence="15">
    <location>
        <begin position="338"/>
        <end position="340"/>
    </location>
</feature>
<feature type="turn" evidence="15">
    <location>
        <begin position="344"/>
        <end position="347"/>
    </location>
</feature>
<dbReference type="EC" id="4.1.2.13"/>
<dbReference type="EMBL" id="D10446">
    <property type="protein sequence ID" value="BAA01236.1"/>
    <property type="molecule type" value="Genomic_DNA"/>
</dbReference>
<dbReference type="EMBL" id="D10446">
    <property type="protein sequence ID" value="BAA01237.1"/>
    <property type="molecule type" value="Genomic_DNA"/>
</dbReference>
<dbReference type="EMBL" id="D10446">
    <property type="protein sequence ID" value="BAA01238.1"/>
    <property type="molecule type" value="Genomic_DNA"/>
</dbReference>
<dbReference type="EMBL" id="M98351">
    <property type="protein sequence ID" value="AAA99426.1"/>
    <property type="molecule type" value="Genomic_DNA"/>
</dbReference>
<dbReference type="EMBL" id="M98351">
    <property type="protein sequence ID" value="AAA99427.1"/>
    <property type="molecule type" value="Genomic_DNA"/>
</dbReference>
<dbReference type="EMBL" id="M98351">
    <property type="protein sequence ID" value="AAA99428.1"/>
    <property type="molecule type" value="Genomic_DNA"/>
</dbReference>
<dbReference type="EMBL" id="X60064">
    <property type="protein sequence ID" value="CAA42666.1"/>
    <property type="status" value="ALT_SEQ"/>
    <property type="molecule type" value="Genomic_DNA"/>
</dbReference>
<dbReference type="EMBL" id="X60064">
    <property type="protein sequence ID" value="CAA42667.1"/>
    <property type="molecule type" value="Genomic_DNA"/>
</dbReference>
<dbReference type="EMBL" id="X60064">
    <property type="protein sequence ID" value="CAA42668.1"/>
    <property type="molecule type" value="Genomic_DNA"/>
</dbReference>
<dbReference type="EMBL" id="D10762">
    <property type="protein sequence ID" value="BAA01592.1"/>
    <property type="molecule type" value="mRNA"/>
</dbReference>
<dbReference type="EMBL" id="DQ864133">
    <property type="protein sequence ID" value="ABH06768.1"/>
    <property type="status" value="ALT_SEQ"/>
    <property type="molecule type" value="Genomic_DNA"/>
</dbReference>
<dbReference type="EMBL" id="DQ864134">
    <property type="protein sequence ID" value="ABH06769.1"/>
    <property type="status" value="ALT_SEQ"/>
    <property type="molecule type" value="Genomic_DNA"/>
</dbReference>
<dbReference type="EMBL" id="DQ864135">
    <property type="protein sequence ID" value="ABH06770.1"/>
    <property type="status" value="ALT_SEQ"/>
    <property type="molecule type" value="Genomic_DNA"/>
</dbReference>
<dbReference type="EMBL" id="DQ864136">
    <property type="protein sequence ID" value="ABH06771.1"/>
    <property type="status" value="ALT_SEQ"/>
    <property type="molecule type" value="Genomic_DNA"/>
</dbReference>
<dbReference type="EMBL" id="DQ864137">
    <property type="protein sequence ID" value="ABH06772.1"/>
    <property type="status" value="ALT_SEQ"/>
    <property type="molecule type" value="Genomic_DNA"/>
</dbReference>
<dbReference type="EMBL" id="DQ864138">
    <property type="protein sequence ID" value="ABH06773.1"/>
    <property type="status" value="ALT_SEQ"/>
    <property type="molecule type" value="Genomic_DNA"/>
</dbReference>
<dbReference type="EMBL" id="DQ864139">
    <property type="protein sequence ID" value="ABH06774.1"/>
    <property type="status" value="ALT_SEQ"/>
    <property type="molecule type" value="Genomic_DNA"/>
</dbReference>
<dbReference type="EMBL" id="DQ864140">
    <property type="protein sequence ID" value="ABH06775.1"/>
    <property type="status" value="ALT_SEQ"/>
    <property type="molecule type" value="Genomic_DNA"/>
</dbReference>
<dbReference type="EMBL" id="DQ864141">
    <property type="protein sequence ID" value="ABH06776.1"/>
    <property type="status" value="ALT_SEQ"/>
    <property type="molecule type" value="Genomic_DNA"/>
</dbReference>
<dbReference type="EMBL" id="DQ864142">
    <property type="protein sequence ID" value="ABH06777.1"/>
    <property type="status" value="ALT_SEQ"/>
    <property type="molecule type" value="Genomic_DNA"/>
</dbReference>
<dbReference type="EMBL" id="DQ864143">
    <property type="protein sequence ID" value="ABH06778.1"/>
    <property type="status" value="ALT_SEQ"/>
    <property type="molecule type" value="Genomic_DNA"/>
</dbReference>
<dbReference type="EMBL" id="DQ864144">
    <property type="protein sequence ID" value="ABH06779.1"/>
    <property type="status" value="ALT_SEQ"/>
    <property type="molecule type" value="Genomic_DNA"/>
</dbReference>
<dbReference type="EMBL" id="AE014297">
    <property type="protein sequence ID" value="AAF56579.1"/>
    <property type="molecule type" value="Genomic_DNA"/>
</dbReference>
<dbReference type="EMBL" id="AE014297">
    <property type="protein sequence ID" value="AAN14381.1"/>
    <property type="molecule type" value="Genomic_DNA"/>
</dbReference>
<dbReference type="EMBL" id="AE014297">
    <property type="protein sequence ID" value="AAN14382.1"/>
    <property type="molecule type" value="Genomic_DNA"/>
</dbReference>
<dbReference type="EMBL" id="AE014297">
    <property type="protein sequence ID" value="AAN14384.1"/>
    <property type="molecule type" value="Genomic_DNA"/>
</dbReference>
<dbReference type="EMBL" id="AE014297">
    <property type="protein sequence ID" value="AAS65220.1"/>
    <property type="molecule type" value="Genomic_DNA"/>
</dbReference>
<dbReference type="EMBL" id="AY058667">
    <property type="protein sequence ID" value="AAL13896.1"/>
    <property type="molecule type" value="mRNA"/>
</dbReference>
<dbReference type="EMBL" id="AY128452">
    <property type="protein sequence ID" value="AAM75045.1"/>
    <property type="status" value="ALT_FRAME"/>
    <property type="molecule type" value="mRNA"/>
</dbReference>
<dbReference type="PIR" id="A42027">
    <property type="entry name" value="ADFFR"/>
</dbReference>
<dbReference type="PIR" id="A42263">
    <property type="entry name" value="A42263"/>
</dbReference>
<dbReference type="PIR" id="B42027">
    <property type="entry name" value="ADFF"/>
</dbReference>
<dbReference type="PIR" id="B42263">
    <property type="entry name" value="B42263"/>
</dbReference>
<dbReference type="PIR" id="C42263">
    <property type="entry name" value="C42263"/>
</dbReference>
<dbReference type="PIR" id="JX0233">
    <property type="entry name" value="JX0233"/>
</dbReference>
<dbReference type="PIR" id="S68360">
    <property type="entry name" value="S68360"/>
</dbReference>
<dbReference type="RefSeq" id="NP_001262985.1">
    <molecule id="P07764-3"/>
    <property type="nucleotide sequence ID" value="NM_001276056.1"/>
</dbReference>
<dbReference type="RefSeq" id="NP_001287541.1">
    <molecule id="P07764-1"/>
    <property type="nucleotide sequence ID" value="NM_001300612.1"/>
</dbReference>
<dbReference type="RefSeq" id="NP_524515.2">
    <molecule id="P07764-2"/>
    <property type="nucleotide sequence ID" value="NM_079791.5"/>
</dbReference>
<dbReference type="RefSeq" id="NP_733140.2">
    <molecule id="P07764-3"/>
    <property type="nucleotide sequence ID" value="NM_170261.3"/>
</dbReference>
<dbReference type="RefSeq" id="NP_733141.1">
    <molecule id="P07764-1"/>
    <property type="nucleotide sequence ID" value="NM_170262.2"/>
</dbReference>
<dbReference type="RefSeq" id="NP_733142.1">
    <molecule id="P07764-1"/>
    <property type="nucleotide sequence ID" value="NM_170263.4"/>
</dbReference>
<dbReference type="RefSeq" id="NP_733143.1">
    <molecule id="P07764-1"/>
    <property type="nucleotide sequence ID" value="NM_170264.3"/>
</dbReference>
<dbReference type="RefSeq" id="NP_733144.3">
    <molecule id="P07764-1"/>
    <property type="nucleotide sequence ID" value="NM_170265.4"/>
</dbReference>
<dbReference type="RefSeq" id="NP_733145.3">
    <molecule id="P07764-2"/>
    <property type="nucleotide sequence ID" value="NM_170266.4"/>
</dbReference>
<dbReference type="RefSeq" id="NP_996300.1">
    <molecule id="P07764-3"/>
    <property type="nucleotide sequence ID" value="NM_206577.3"/>
</dbReference>
<dbReference type="PDB" id="1FBA">
    <property type="method" value="X-ray"/>
    <property type="resolution" value="1.90 A"/>
    <property type="chains" value="A/B/C/D=2-361"/>
</dbReference>
<dbReference type="PDBsum" id="1FBA"/>
<dbReference type="SMR" id="P07764"/>
<dbReference type="BioGRID" id="68080">
    <property type="interactions" value="97"/>
</dbReference>
<dbReference type="FunCoup" id="P07764">
    <property type="interactions" value="829"/>
</dbReference>
<dbReference type="IntAct" id="P07764">
    <property type="interactions" value="271"/>
</dbReference>
<dbReference type="STRING" id="7227.FBpp0084373"/>
<dbReference type="GlyGen" id="P07764">
    <property type="glycosylation" value="1 site"/>
</dbReference>
<dbReference type="iPTMnet" id="P07764"/>
<dbReference type="PaxDb" id="7227-FBpp0302781"/>
<dbReference type="DNASU" id="43183"/>
<dbReference type="EnsemblMetazoa" id="FBtr0084994">
    <molecule id="P07764-1"/>
    <property type="protein sequence ID" value="FBpp0084367"/>
    <property type="gene ID" value="FBgn0000064"/>
</dbReference>
<dbReference type="EnsemblMetazoa" id="FBtr0084995">
    <molecule id="P07764-1"/>
    <property type="protein sequence ID" value="FBpp0084368"/>
    <property type="gene ID" value="FBgn0000064"/>
</dbReference>
<dbReference type="EnsemblMetazoa" id="FBtr0084999">
    <molecule id="P07764-1"/>
    <property type="protein sequence ID" value="FBpp0084372"/>
    <property type="gene ID" value="FBgn0000064"/>
</dbReference>
<dbReference type="EnsemblMetazoa" id="FBtr0085000">
    <molecule id="P07764-2"/>
    <property type="protein sequence ID" value="FBpp0084373"/>
    <property type="gene ID" value="FBgn0000064"/>
</dbReference>
<dbReference type="EnsemblMetazoa" id="FBtr0085001">
    <molecule id="P07764-3"/>
    <property type="protein sequence ID" value="FBpp0089214"/>
    <property type="gene ID" value="FBgn0000064"/>
</dbReference>
<dbReference type="EnsemblMetazoa" id="FBtr0114544">
    <molecule id="P07764-2"/>
    <property type="protein sequence ID" value="FBpp0113036"/>
    <property type="gene ID" value="FBgn0000064"/>
</dbReference>
<dbReference type="EnsemblMetazoa" id="FBtr0306657">
    <molecule id="P07764-3"/>
    <property type="protein sequence ID" value="FBpp0297612"/>
    <property type="gene ID" value="FBgn0000064"/>
</dbReference>
<dbReference type="EnsemblMetazoa" id="FBtr0310660">
    <molecule id="P07764-1"/>
    <property type="protein sequence ID" value="FBpp0302780"/>
    <property type="gene ID" value="FBgn0000064"/>
</dbReference>
<dbReference type="EnsemblMetazoa" id="FBtr0310661">
    <molecule id="P07764-3"/>
    <property type="protein sequence ID" value="FBpp0302781"/>
    <property type="gene ID" value="FBgn0000064"/>
</dbReference>
<dbReference type="EnsemblMetazoa" id="FBtr0339614">
    <molecule id="P07764-1"/>
    <property type="protein sequence ID" value="FBpp0308680"/>
    <property type="gene ID" value="FBgn0000064"/>
</dbReference>
<dbReference type="GeneID" id="43183"/>
<dbReference type="KEGG" id="dme:Dmel_CG6058"/>
<dbReference type="AGR" id="FB:FBgn0000064"/>
<dbReference type="CTD" id="43183"/>
<dbReference type="FlyBase" id="FBgn0000064">
    <property type="gene designation" value="Ald1"/>
</dbReference>
<dbReference type="VEuPathDB" id="VectorBase:FBgn0000064"/>
<dbReference type="eggNOG" id="KOG1557">
    <property type="taxonomic scope" value="Eukaryota"/>
</dbReference>
<dbReference type="GeneTree" id="ENSGT00950000182987"/>
<dbReference type="HOGENOM" id="CLU_031243_0_0_1"/>
<dbReference type="InParanoid" id="P07764"/>
<dbReference type="OMA" id="WRAVITI"/>
<dbReference type="OrthoDB" id="36455at2759"/>
<dbReference type="PhylomeDB" id="P07764"/>
<dbReference type="Reactome" id="R-DME-114608">
    <property type="pathway name" value="Platelet degranulation"/>
</dbReference>
<dbReference type="Reactome" id="R-DME-6798695">
    <property type="pathway name" value="Neutrophil degranulation"/>
</dbReference>
<dbReference type="Reactome" id="R-DME-70171">
    <property type="pathway name" value="Glycolysis"/>
</dbReference>
<dbReference type="Reactome" id="R-DME-70263">
    <property type="pathway name" value="Gluconeogenesis"/>
</dbReference>
<dbReference type="Reactome" id="R-DME-70350">
    <property type="pathway name" value="Fructose catabolism"/>
</dbReference>
<dbReference type="SABIO-RK" id="P07764"/>
<dbReference type="SignaLink" id="P07764"/>
<dbReference type="UniPathway" id="UPA00109">
    <property type="reaction ID" value="UER00183"/>
</dbReference>
<dbReference type="BioGRID-ORCS" id="43183">
    <property type="hits" value="1 hit in 3 CRISPR screens"/>
</dbReference>
<dbReference type="ChiTaRS" id="Ald">
    <property type="organism name" value="fly"/>
</dbReference>
<dbReference type="EvolutionaryTrace" id="P07764"/>
<dbReference type="GenomeRNAi" id="43183"/>
<dbReference type="PRO" id="PR:P07764"/>
<dbReference type="Proteomes" id="UP000000803">
    <property type="component" value="Chromosome 3R"/>
</dbReference>
<dbReference type="Bgee" id="FBgn0000064">
    <property type="expression patterns" value="Expressed in muscle cell in haltere and 280 other cell types or tissues"/>
</dbReference>
<dbReference type="ExpressionAtlas" id="P07764">
    <property type="expression patterns" value="baseline and differential"/>
</dbReference>
<dbReference type="GO" id="GO:0005829">
    <property type="term" value="C:cytosol"/>
    <property type="evidence" value="ECO:0007005"/>
    <property type="project" value="FlyBase"/>
</dbReference>
<dbReference type="GO" id="GO:0031430">
    <property type="term" value="C:M band"/>
    <property type="evidence" value="ECO:0000314"/>
    <property type="project" value="FlyBase"/>
</dbReference>
<dbReference type="GO" id="GO:0030018">
    <property type="term" value="C:Z disc"/>
    <property type="evidence" value="ECO:0000314"/>
    <property type="project" value="FlyBase"/>
</dbReference>
<dbReference type="GO" id="GO:0061609">
    <property type="term" value="F:fructose-1-phosphate aldolase activity"/>
    <property type="evidence" value="ECO:0000314"/>
    <property type="project" value="FlyBase"/>
</dbReference>
<dbReference type="GO" id="GO:0004332">
    <property type="term" value="F:fructose-bisphosphate aldolase activity"/>
    <property type="evidence" value="ECO:0000314"/>
    <property type="project" value="FlyBase"/>
</dbReference>
<dbReference type="GO" id="GO:0061621">
    <property type="term" value="P:canonical glycolysis"/>
    <property type="evidence" value="ECO:0000316"/>
    <property type="project" value="FlyBase"/>
</dbReference>
<dbReference type="GO" id="GO:0030388">
    <property type="term" value="P:fructose 1,6-bisphosphate metabolic process"/>
    <property type="evidence" value="ECO:0000314"/>
    <property type="project" value="FlyBase"/>
</dbReference>
<dbReference type="GO" id="GO:0006001">
    <property type="term" value="P:fructose catabolic process"/>
    <property type="evidence" value="ECO:0000250"/>
    <property type="project" value="FlyBase"/>
</dbReference>
<dbReference type="GO" id="GO:0006094">
    <property type="term" value="P:gluconeogenesis"/>
    <property type="evidence" value="ECO:0000250"/>
    <property type="project" value="FlyBase"/>
</dbReference>
<dbReference type="GO" id="GO:0042593">
    <property type="term" value="P:glucose homeostasis"/>
    <property type="evidence" value="ECO:0000315"/>
    <property type="project" value="FlyBase"/>
</dbReference>
<dbReference type="GO" id="GO:0019682">
    <property type="term" value="P:glyceraldehyde-3-phosphate metabolic process"/>
    <property type="evidence" value="ECO:0000314"/>
    <property type="project" value="FlyBase"/>
</dbReference>
<dbReference type="GO" id="GO:0006096">
    <property type="term" value="P:glycolytic process"/>
    <property type="evidence" value="ECO:0000314"/>
    <property type="project" value="FlyBase"/>
</dbReference>
<dbReference type="GO" id="GO:0007498">
    <property type="term" value="P:mesoderm development"/>
    <property type="evidence" value="ECO:0000303"/>
    <property type="project" value="FlyBase"/>
</dbReference>
<dbReference type="CDD" id="cd00948">
    <property type="entry name" value="FBP_aldolase_I_a"/>
    <property type="match status" value="1"/>
</dbReference>
<dbReference type="FunFam" id="3.20.20.70:FF:000021">
    <property type="entry name" value="Fructose-bisphosphate aldolase"/>
    <property type="match status" value="1"/>
</dbReference>
<dbReference type="Gene3D" id="3.20.20.70">
    <property type="entry name" value="Aldolase class I"/>
    <property type="match status" value="1"/>
</dbReference>
<dbReference type="InterPro" id="IPR029768">
    <property type="entry name" value="Aldolase_I_AS"/>
</dbReference>
<dbReference type="InterPro" id="IPR013785">
    <property type="entry name" value="Aldolase_TIM"/>
</dbReference>
<dbReference type="InterPro" id="IPR000741">
    <property type="entry name" value="FBA_I"/>
</dbReference>
<dbReference type="NCBIfam" id="NF033379">
    <property type="entry name" value="FrucBisAld_I"/>
    <property type="match status" value="1"/>
</dbReference>
<dbReference type="PANTHER" id="PTHR11627">
    <property type="entry name" value="FRUCTOSE-BISPHOSPHATE ALDOLASE"/>
    <property type="match status" value="1"/>
</dbReference>
<dbReference type="Pfam" id="PF00274">
    <property type="entry name" value="Glycolytic"/>
    <property type="match status" value="1"/>
</dbReference>
<dbReference type="SUPFAM" id="SSF51569">
    <property type="entry name" value="Aldolase"/>
    <property type="match status" value="1"/>
</dbReference>
<dbReference type="PROSITE" id="PS00158">
    <property type="entry name" value="ALDOLASE_CLASS_I"/>
    <property type="match status" value="1"/>
</dbReference>
<accession>P07764</accession>
<accession>A4V3F9</accession>
<accession>A5XCY2</accession>
<accession>P29841</accession>
<accession>Q24236</accession>
<accession>Q24237</accession>
<accession>Q7KRY9</accession>
<accession>Q8IMS1</accession>
<accession>Q8MQQ4</accession>
<accession>Q9VBG2</accession>
<accession>Q9VBG3</accession>
<keyword id="KW-0002">3D-structure</keyword>
<keyword id="KW-0007">Acetylation</keyword>
<keyword id="KW-0025">Alternative splicing</keyword>
<keyword id="KW-0903">Direct protein sequencing</keyword>
<keyword id="KW-0324">Glycolysis</keyword>
<keyword id="KW-0456">Lyase</keyword>
<keyword id="KW-1185">Reference proteome</keyword>
<keyword id="KW-0704">Schiff base</keyword>
<sequence>MTTYFNYPSKELQDELREIAQKIVAPGKGILAADESGPTMGKRLQDIGVENTEDNRRAYRQLLFSTDPKLAENISGVILFHETLYQKADDGTPFAEILKKKGIILGIKVDKGVVPLFGSEDEVTTQGLDDLAARCAQYKKDGCDFAKWRCVLKIGKNTPSYQSILENANVLARYASICQSQRIVPIVEPEVLPDGDHDLDRAQKVTETVLAAVYKALSDHHVYLEGTLLKPNMVTAGQSAKKNTPEEIALATVQALRRTVPAAVTGVTFLSGGQSEEEATVNLSAINNVPLIRPWALTFSYGRALQASVLRAWAGKKENIAAGQNELLKRAKANGDAAQGKYVAGSAGAGSGSLFVANHAY</sequence>
<comment type="function">
    <text evidence="4 6 12">Enzyme of the glycolytic pathway (Probable). Glycolysis is essential in glial cells but not in neurons; neurons rely on the citric acid cycle for their energy needs, and on lactate and alanine secreted into the hemolymph by glial cells to fuel it (PubMed:26235423). May take part in developmental stage-specific or tissue -specific sugar-phosphate metabolisms (PubMed:8537310). Protein acts on two substrates fructose 1,6-bisphosphate and fructose 1-phosphate (like other class I aldolases) (PubMed:8537310).</text>
</comment>
<comment type="catalytic activity">
    <reaction evidence="6">
        <text>beta-D-fructose 1,6-bisphosphate = D-glyceraldehyde 3-phosphate + dihydroxyacetone phosphate</text>
        <dbReference type="Rhea" id="RHEA:14729"/>
        <dbReference type="ChEBI" id="CHEBI:32966"/>
        <dbReference type="ChEBI" id="CHEBI:57642"/>
        <dbReference type="ChEBI" id="CHEBI:59776"/>
        <dbReference type="EC" id="4.1.2.13"/>
    </reaction>
</comment>
<comment type="biophysicochemical properties">
    <phDependence>
        <text evidence="6">Optimum pH is 7.2-7.8 for isozyme alpha, and 7.2-7.5 for isozymes beta and gamma.</text>
    </phDependence>
    <temperatureDependence>
        <text evidence="6">Thermostability of the isozymes, calculated as the temperature causing half maximal stability, is 42-43 degrees Celsius for isozymes alpha and beta and 45 degrees Celsius for isozyme gamma.</text>
    </temperatureDependence>
</comment>
<comment type="pathway">
    <text>Carbohydrate degradation; glycolysis; D-glyceraldehyde 3-phosphate and glycerone phosphate from D-glucose: step 4/4.</text>
</comment>
<comment type="subunit">
    <text evidence="6">Homotetramer.</text>
</comment>
<comment type="alternative products">
    <event type="alternative splicing"/>
    <isoform>
        <id>P07764-1</id>
        <name evidence="8 10">Gamma</name>
        <name>4C</name>
        <name evidence="13">B</name>
        <name evidence="13">C</name>
        <name evidence="13">D</name>
        <name evidence="13">K</name>
        <name evidence="13">M</name>
        <sequence type="displayed"/>
    </isoform>
    <isoform>
        <id>P07764-2</id>
        <name evidence="8 10">Alpha</name>
        <name>4A</name>
        <name evidence="13">E</name>
        <name evidence="13">I</name>
        <sequence type="described" ref="VSP_000223"/>
    </isoform>
    <isoform>
        <id>P07764-3</id>
        <name evidence="8 10">Beta</name>
        <name>4B</name>
        <name evidence="13">H</name>
        <name evidence="13">J</name>
        <name evidence="13">L</name>
        <sequence type="described" ref="VSP_000221"/>
    </isoform>
    <text evidence="2">At least two additional mRNAs also exist (Alpha-beta and Beta-gamma) (PubMed:1339430). The translation product of Alpha-beta mRNA is isoform Alpha while Beta-gamma mRNAs encode isoform Beta (PubMed:1339430).</text>
</comment>
<comment type="tissue specificity">
    <molecule>Isoform Gamma</molecule>
    <text evidence="2 6">Mainly expressed in the heads and partly in the thoraxes of adult flies.</text>
</comment>
<comment type="tissue specificity">
    <molecule>Isoform Alpha</molecule>
    <text evidence="2 6">Expressed in all adult tissues (PubMed:1339430, PubMed:8537310). The Alpha-beta mRNA shows strong expression in the abdomens of adults (PubMed:1339430, PubMed:8537310).</text>
</comment>
<comment type="tissue specificity">
    <molecule>Isoform Beta</molecule>
    <text evidence="2 6">Mainly expressed in adult abdominal regions and is also expressed in lesser amounts in other parts of the body (PubMed:1339430, PubMed:8537310). The Beta-gamma mRNA is expressed in adult heads (PubMed:1339430, PubMed:8537310).</text>
</comment>
<comment type="developmental stage">
    <text evidence="4">Enriched in the perineurial glia on the surface of the larval central nervous system (at protein level).</text>
</comment>
<comment type="developmental stage">
    <molecule>Isoform Gamma</molecule>
    <text evidence="6">First detected during late embryogenesis, is present through larval stages, declines in abundance during pupal stages and is maximum at eclosion.</text>
</comment>
<comment type="developmental stage">
    <molecule>Isoform Alpha</molecule>
    <text evidence="2 6">The Alpha mRNA is only expressed in adults (PubMed:8537310). The Alpha-beta mRNA is detected in pupae and adults (PubMed:1339430).</text>
</comment>
<comment type="developmental stage">
    <molecule>Isoform Beta</molecule>
    <text evidence="2 6">The Beta mRNA is abundant during the earliest stages of embryogenesis, declines in amount and increases prior to hatching (PubMed:8537310). The Beta-gamma mRNA is expressed in adults (PubMed:1339430).</text>
</comment>
<comment type="induction">
    <text evidence="2">Expression correlates to dietary behavior: high dietary activity in the larvae and adults causes active glycolysis and high expression levels.</text>
</comment>
<comment type="disruption phenotype">
    <text evidence="4">RNAi-mediated knockdown is lethal (PubMed:26235423). Glial-specific RNAi-mediated knockdown is semi-lethal (PubMed:26235423). Neuronal-specific RNAi-mediated knockdown is viable with no defects (PubMed:26235423).</text>
</comment>
<comment type="similarity">
    <text evidence="11">Belongs to the class I fructose-bisphosphate aldolase family.</text>
</comment>
<comment type="sequence caution" evidence="11">
    <conflict type="frameshift">
        <sequence resource="EMBL-CDS" id="AAM75045"/>
    </conflict>
</comment>
<comment type="sequence caution" evidence="11">
    <conflict type="erroneous gene model prediction">
        <sequence resource="EMBL-CDS" id="ABH06768"/>
    </conflict>
</comment>
<comment type="sequence caution" evidence="11">
    <conflict type="erroneous gene model prediction">
        <sequence resource="EMBL-CDS" id="ABH06769"/>
    </conflict>
</comment>
<comment type="sequence caution" evidence="11">
    <conflict type="erroneous gene model prediction">
        <sequence resource="EMBL-CDS" id="ABH06770"/>
    </conflict>
</comment>
<comment type="sequence caution" evidence="11">
    <conflict type="erroneous gene model prediction">
        <sequence resource="EMBL-CDS" id="ABH06771"/>
    </conflict>
</comment>
<comment type="sequence caution" evidence="11">
    <conflict type="erroneous gene model prediction">
        <sequence resource="EMBL-CDS" id="ABH06772"/>
    </conflict>
</comment>
<comment type="sequence caution" evidence="11">
    <conflict type="erroneous gene model prediction">
        <sequence resource="EMBL-CDS" id="ABH06773"/>
    </conflict>
</comment>
<comment type="sequence caution" evidence="11">
    <conflict type="erroneous gene model prediction">
        <sequence resource="EMBL-CDS" id="ABH06774"/>
    </conflict>
</comment>
<comment type="sequence caution" evidence="11">
    <conflict type="erroneous gene model prediction">
        <sequence resource="EMBL-CDS" id="ABH06775"/>
    </conflict>
</comment>
<comment type="sequence caution" evidence="11">
    <conflict type="erroneous gene model prediction">
        <sequence resource="EMBL-CDS" id="ABH06776"/>
    </conflict>
</comment>
<comment type="sequence caution" evidence="11">
    <conflict type="erroneous gene model prediction">
        <sequence resource="EMBL-CDS" id="ABH06777"/>
    </conflict>
</comment>
<comment type="sequence caution" evidence="11">
    <conflict type="erroneous gene model prediction">
        <sequence resource="EMBL-CDS" id="ABH06778"/>
    </conflict>
</comment>
<comment type="sequence caution" evidence="11">
    <conflict type="erroneous gene model prediction">
        <sequence resource="EMBL-CDS" id="ABH06779"/>
    </conflict>
</comment>
<comment type="sequence caution" evidence="11">
    <conflict type="erroneous gene model prediction">
        <sequence resource="EMBL-CDS" id="CAA42666"/>
    </conflict>
</comment>
<protein>
    <recommendedName>
        <fullName>Fructose-bisphosphate aldolase</fullName>
        <ecNumber>4.1.2.13</ecNumber>
    </recommendedName>
    <alternativeName>
        <fullName evidence="13">Aldolase-1</fullName>
    </alternativeName>
</protein>
<organism evidence="14">
    <name type="scientific">Drosophila melanogaster</name>
    <name type="common">Fruit fly</name>
    <dbReference type="NCBI Taxonomy" id="7227"/>
    <lineage>
        <taxon>Eukaryota</taxon>
        <taxon>Metazoa</taxon>
        <taxon>Ecdysozoa</taxon>
        <taxon>Arthropoda</taxon>
        <taxon>Hexapoda</taxon>
        <taxon>Insecta</taxon>
        <taxon>Pterygota</taxon>
        <taxon>Neoptera</taxon>
        <taxon>Endopterygota</taxon>
        <taxon>Diptera</taxon>
        <taxon>Brachycera</taxon>
        <taxon>Muscomorpha</taxon>
        <taxon>Ephydroidea</taxon>
        <taxon>Drosophilidae</taxon>
        <taxon>Drosophila</taxon>
        <taxon>Sophophora</taxon>
    </lineage>
</organism>
<gene>
    <name evidence="13" type="primary">Ald1</name>
    <name evidence="13" type="ORF">CG6058</name>
</gene>
<evidence type="ECO:0000250" key="1"/>
<evidence type="ECO:0000269" key="2">
    <source>
    </source>
</evidence>
<evidence type="ECO:0000269" key="3">
    <source>
    </source>
</evidence>
<evidence type="ECO:0000269" key="4">
    <source>
    </source>
</evidence>
<evidence type="ECO:0000269" key="5">
    <source>
    </source>
</evidence>
<evidence type="ECO:0000269" key="6">
    <source>
    </source>
</evidence>
<evidence type="ECO:0000303" key="7">
    <source>
    </source>
</evidence>
<evidence type="ECO:0000303" key="8">
    <source>
    </source>
</evidence>
<evidence type="ECO:0000303" key="9">
    <source>
    </source>
</evidence>
<evidence type="ECO:0000303" key="10">
    <source>
    </source>
</evidence>
<evidence type="ECO:0000305" key="11"/>
<evidence type="ECO:0000305" key="12">
    <source>
    </source>
</evidence>
<evidence type="ECO:0000312" key="13">
    <source>
        <dbReference type="FlyBase" id="FBgn0000064"/>
    </source>
</evidence>
<evidence type="ECO:0000312" key="14">
    <source>
        <dbReference type="Proteomes" id="UP000000803"/>
    </source>
</evidence>
<evidence type="ECO:0007829" key="15">
    <source>
        <dbReference type="PDB" id="1FBA"/>
    </source>
</evidence>
<reference key="1">
    <citation type="journal article" date="1992" name="J. Biochem.">
        <title>Gene structure and multiple mRNA species of Drosophila melanogaster aldolase generating three isozymes with different enzymatic properties.</title>
        <authorList>
            <person name="Kai T."/>
            <person name="Sugimoto Y."/>
            <person name="Kusakabe T."/>
            <person name="Zhang R."/>
            <person name="Koga K."/>
            <person name="Hori K."/>
        </authorList>
    </citation>
    <scope>NUCLEOTIDE SEQUENCE [GENOMIC DNA]</scope>
    <scope>ALTERNATIVE SPLICING (ISOFORMS ALPHA; BETA AND GAMMA)</scope>
    <scope>TISSUE SPECIFICITY</scope>
    <scope>INDUCTION BY DIETARY BEHAVIOR</scope>
    <source>
        <strain>Oregon-R</strain>
    </source>
</reference>
<reference key="2">
    <citation type="journal article" date="1992" name="J. Biol. Chem.">
        <title>Alternative splicing of fructose 1,6-bisphosphate aldolase transcripts in Drosophila melanogaster predicts three isozymes.</title>
        <authorList>
            <person name="Shaw-Lee R."/>
            <person name="Lissemore J.L."/>
            <person name="Sullivan D.T."/>
            <person name="Tolan D.R."/>
        </authorList>
    </citation>
    <scope>NUCLEOTIDE SEQUENCE [GENOMIC DNA]</scope>
    <scope>ALTERNATIVE SPLICING (ISOFORMS ALPHA; BETA AND GAMMA)</scope>
    <source>
        <strain>Oregon-R</strain>
    </source>
</reference>
<reference key="3">
    <citation type="journal article" date="1992" name="Mol. Cell. Biol.">
        <title>Alternate use of divergent forms of an ancient exon in the fructose-1,6-bisphosphate aldolase gene of Drosophila melanogaster.</title>
        <authorList>
            <person name="Kim J."/>
            <person name="Yim J.J."/>
            <person name="Wang S."/>
            <person name="Dorsett D."/>
        </authorList>
    </citation>
    <scope>NUCLEOTIDE SEQUENCE [GENOMIC DNA]</scope>
    <scope>ALTERNATIVE SPLICING (ISOFORMS BETA AND GAMMA)</scope>
    <source>
        <strain>Oregon-R</strain>
        <tissue>Head</tissue>
    </source>
</reference>
<reference key="4">
    <citation type="journal article" date="1995" name="Arch. Biochem. Biophys.">
        <title>Analysis of the in vitro translation product of a novel-type Drosophila melanogaster aldolase mRNA in which two carboxyl-terminal exons remain unspliced.</title>
        <authorList>
            <person name="Sugimoto Y."/>
            <person name="Kusakabe T."/>
            <person name="Kai T."/>
            <person name="Okamura T."/>
            <person name="Koga K."/>
            <person name="Hori K."/>
        </authorList>
    </citation>
    <scope>NUCLEOTIDE SEQUENCE [MRNA] (ISOFORM ALPHA)</scope>
    <scope>PROTEIN SEQUENCE OF 354-361 (ISOFORM ALPHA)</scope>
    <source>
        <strain>Oregon-R</strain>
    </source>
</reference>
<reference key="5">
    <citation type="journal article" date="2007" name="Mol. Biol. Evol.">
        <title>Adaptive evolution of metabolic pathways in Drosophila.</title>
        <authorList>
            <person name="Flowers J."/>
            <person name="Sezgin E."/>
            <person name="Kumagai S."/>
            <person name="Duvernell D."/>
            <person name="Matzkin L."/>
            <person name="Schmidt P."/>
            <person name="Eanes W."/>
        </authorList>
    </citation>
    <scope>NUCLEOTIDE SEQUENCE [GENOMIC DNA]</scope>
    <source>
        <strain>DPF3</strain>
        <strain>DPF4</strain>
        <strain>HFL12</strain>
        <strain>HFL13</strain>
        <strain>HFL15</strain>
        <strain>HFL16</strain>
        <strain>HFL8</strain>
        <strain>SC12</strain>
        <strain>SC19</strain>
        <strain>VT1</strain>
        <strain>VT39</strain>
        <strain>VT41</strain>
    </source>
</reference>
<reference key="6">
    <citation type="journal article" date="2000" name="Science">
        <title>The genome sequence of Drosophila melanogaster.</title>
        <authorList>
            <person name="Adams M.D."/>
            <person name="Celniker S.E."/>
            <person name="Holt R.A."/>
            <person name="Evans C.A."/>
            <person name="Gocayne J.D."/>
            <person name="Amanatides P.G."/>
            <person name="Scherer S.E."/>
            <person name="Li P.W."/>
            <person name="Hoskins R.A."/>
            <person name="Galle R.F."/>
            <person name="George R.A."/>
            <person name="Lewis S.E."/>
            <person name="Richards S."/>
            <person name="Ashburner M."/>
            <person name="Henderson S.N."/>
            <person name="Sutton G.G."/>
            <person name="Wortman J.R."/>
            <person name="Yandell M.D."/>
            <person name="Zhang Q."/>
            <person name="Chen L.X."/>
            <person name="Brandon R.C."/>
            <person name="Rogers Y.-H.C."/>
            <person name="Blazej R.G."/>
            <person name="Champe M."/>
            <person name="Pfeiffer B.D."/>
            <person name="Wan K.H."/>
            <person name="Doyle C."/>
            <person name="Baxter E.G."/>
            <person name="Helt G."/>
            <person name="Nelson C.R."/>
            <person name="Miklos G.L.G."/>
            <person name="Abril J.F."/>
            <person name="Agbayani A."/>
            <person name="An H.-J."/>
            <person name="Andrews-Pfannkoch C."/>
            <person name="Baldwin D."/>
            <person name="Ballew R.M."/>
            <person name="Basu A."/>
            <person name="Baxendale J."/>
            <person name="Bayraktaroglu L."/>
            <person name="Beasley E.M."/>
            <person name="Beeson K.Y."/>
            <person name="Benos P.V."/>
            <person name="Berman B.P."/>
            <person name="Bhandari D."/>
            <person name="Bolshakov S."/>
            <person name="Borkova D."/>
            <person name="Botchan M.R."/>
            <person name="Bouck J."/>
            <person name="Brokstein P."/>
            <person name="Brottier P."/>
            <person name="Burtis K.C."/>
            <person name="Busam D.A."/>
            <person name="Butler H."/>
            <person name="Cadieu E."/>
            <person name="Center A."/>
            <person name="Chandra I."/>
            <person name="Cherry J.M."/>
            <person name="Cawley S."/>
            <person name="Dahlke C."/>
            <person name="Davenport L.B."/>
            <person name="Davies P."/>
            <person name="de Pablos B."/>
            <person name="Delcher A."/>
            <person name="Deng Z."/>
            <person name="Mays A.D."/>
            <person name="Dew I."/>
            <person name="Dietz S.M."/>
            <person name="Dodson K."/>
            <person name="Doup L.E."/>
            <person name="Downes M."/>
            <person name="Dugan-Rocha S."/>
            <person name="Dunkov B.C."/>
            <person name="Dunn P."/>
            <person name="Durbin K.J."/>
            <person name="Evangelista C.C."/>
            <person name="Ferraz C."/>
            <person name="Ferriera S."/>
            <person name="Fleischmann W."/>
            <person name="Fosler C."/>
            <person name="Gabrielian A.E."/>
            <person name="Garg N.S."/>
            <person name="Gelbart W.M."/>
            <person name="Glasser K."/>
            <person name="Glodek A."/>
            <person name="Gong F."/>
            <person name="Gorrell J.H."/>
            <person name="Gu Z."/>
            <person name="Guan P."/>
            <person name="Harris M."/>
            <person name="Harris N.L."/>
            <person name="Harvey D.A."/>
            <person name="Heiman T.J."/>
            <person name="Hernandez J.R."/>
            <person name="Houck J."/>
            <person name="Hostin D."/>
            <person name="Houston K.A."/>
            <person name="Howland T.J."/>
            <person name="Wei M.-H."/>
            <person name="Ibegwam C."/>
            <person name="Jalali M."/>
            <person name="Kalush F."/>
            <person name="Karpen G.H."/>
            <person name="Ke Z."/>
            <person name="Kennison J.A."/>
            <person name="Ketchum K.A."/>
            <person name="Kimmel B.E."/>
            <person name="Kodira C.D."/>
            <person name="Kraft C.L."/>
            <person name="Kravitz S."/>
            <person name="Kulp D."/>
            <person name="Lai Z."/>
            <person name="Lasko P."/>
            <person name="Lei Y."/>
            <person name="Levitsky A.A."/>
            <person name="Li J.H."/>
            <person name="Li Z."/>
            <person name="Liang Y."/>
            <person name="Lin X."/>
            <person name="Liu X."/>
            <person name="Mattei B."/>
            <person name="McIntosh T.C."/>
            <person name="McLeod M.P."/>
            <person name="McPherson D."/>
            <person name="Merkulov G."/>
            <person name="Milshina N.V."/>
            <person name="Mobarry C."/>
            <person name="Morris J."/>
            <person name="Moshrefi A."/>
            <person name="Mount S.M."/>
            <person name="Moy M."/>
            <person name="Murphy B."/>
            <person name="Murphy L."/>
            <person name="Muzny D.M."/>
            <person name="Nelson D.L."/>
            <person name="Nelson D.R."/>
            <person name="Nelson K.A."/>
            <person name="Nixon K."/>
            <person name="Nusskern D.R."/>
            <person name="Pacleb J.M."/>
            <person name="Palazzolo M."/>
            <person name="Pittman G.S."/>
            <person name="Pan S."/>
            <person name="Pollard J."/>
            <person name="Puri V."/>
            <person name="Reese M.G."/>
            <person name="Reinert K."/>
            <person name="Remington K."/>
            <person name="Saunders R.D.C."/>
            <person name="Scheeler F."/>
            <person name="Shen H."/>
            <person name="Shue B.C."/>
            <person name="Siden-Kiamos I."/>
            <person name="Simpson M."/>
            <person name="Skupski M.P."/>
            <person name="Smith T.J."/>
            <person name="Spier E."/>
            <person name="Spradling A.C."/>
            <person name="Stapleton M."/>
            <person name="Strong R."/>
            <person name="Sun E."/>
            <person name="Svirskas R."/>
            <person name="Tector C."/>
            <person name="Turner R."/>
            <person name="Venter E."/>
            <person name="Wang A.H."/>
            <person name="Wang X."/>
            <person name="Wang Z.-Y."/>
            <person name="Wassarman D.A."/>
            <person name="Weinstock G.M."/>
            <person name="Weissenbach J."/>
            <person name="Williams S.M."/>
            <person name="Woodage T."/>
            <person name="Worley K.C."/>
            <person name="Wu D."/>
            <person name="Yang S."/>
            <person name="Yao Q.A."/>
            <person name="Ye J."/>
            <person name="Yeh R.-F."/>
            <person name="Zaveri J.S."/>
            <person name="Zhan M."/>
            <person name="Zhang G."/>
            <person name="Zhao Q."/>
            <person name="Zheng L."/>
            <person name="Zheng X.H."/>
            <person name="Zhong F.N."/>
            <person name="Zhong W."/>
            <person name="Zhou X."/>
            <person name="Zhu S.C."/>
            <person name="Zhu X."/>
            <person name="Smith H.O."/>
            <person name="Gibbs R.A."/>
            <person name="Myers E.W."/>
            <person name="Rubin G.M."/>
            <person name="Venter J.C."/>
        </authorList>
    </citation>
    <scope>NUCLEOTIDE SEQUENCE [LARGE SCALE GENOMIC DNA]</scope>
    <source>
        <strain>Berkeley</strain>
    </source>
</reference>
<reference key="7">
    <citation type="journal article" date="2002" name="Genome Biol.">
        <title>Annotation of the Drosophila melanogaster euchromatic genome: a systematic review.</title>
        <authorList>
            <person name="Misra S."/>
            <person name="Crosby M.A."/>
            <person name="Mungall C.J."/>
            <person name="Matthews B.B."/>
            <person name="Campbell K.S."/>
            <person name="Hradecky P."/>
            <person name="Huang Y."/>
            <person name="Kaminker J.S."/>
            <person name="Millburn G.H."/>
            <person name="Prochnik S.E."/>
            <person name="Smith C.D."/>
            <person name="Tupy J.L."/>
            <person name="Whitfield E.J."/>
            <person name="Bayraktaroglu L."/>
            <person name="Berman B.P."/>
            <person name="Bettencourt B.R."/>
            <person name="Celniker S.E."/>
            <person name="de Grey A.D.N.J."/>
            <person name="Drysdale R.A."/>
            <person name="Harris N.L."/>
            <person name="Richter J."/>
            <person name="Russo S."/>
            <person name="Schroeder A.J."/>
            <person name="Shu S.Q."/>
            <person name="Stapleton M."/>
            <person name="Yamada C."/>
            <person name="Ashburner M."/>
            <person name="Gelbart W.M."/>
            <person name="Rubin G.M."/>
            <person name="Lewis S.E."/>
        </authorList>
    </citation>
    <scope>GENOME REANNOTATION</scope>
    <scope>ALTERNATIVE SPLICING</scope>
    <source>
        <strain>Berkeley</strain>
    </source>
</reference>
<reference key="8">
    <citation type="journal article" date="2002" name="Genome Biol.">
        <title>A Drosophila full-length cDNA resource.</title>
        <authorList>
            <person name="Stapleton M."/>
            <person name="Carlson J.W."/>
            <person name="Brokstein P."/>
            <person name="Yu C."/>
            <person name="Champe M."/>
            <person name="George R.A."/>
            <person name="Guarin H."/>
            <person name="Kronmiller B."/>
            <person name="Pacleb J.M."/>
            <person name="Park S."/>
            <person name="Wan K.H."/>
            <person name="Rubin G.M."/>
            <person name="Celniker S.E."/>
        </authorList>
    </citation>
    <scope>NUCLEOTIDE SEQUENCE [LARGE SCALE MRNA] (ISOFORMS BETA AND GAMMA)</scope>
    <source>
        <strain>Berkeley</strain>
        <tissue>Embryo</tissue>
        <tissue>Larva</tissue>
        <tissue>Pupae</tissue>
    </source>
</reference>
<reference key="9">
    <citation type="journal article" date="1985" name="Biochem. Biophys. Res. Commun.">
        <title>Amino acid sequence of an invertebrate FBP aldolase (from Drosophila melanogaster).</title>
        <authorList>
            <person name="Malek A.A."/>
            <person name="Suter F.X."/>
            <person name="Frank G."/>
            <person name="Brenner-Holzach O."/>
        </authorList>
    </citation>
    <scope>PROTEIN SEQUENCE OF 2-361 (ISOFORM GAMMA)</scope>
    <scope>ACETYLATION AT THR-2</scope>
</reference>
<reference key="10">
    <citation type="journal article" date="1988" name="Arch. Biochem. Biophys.">
        <title>Fructose-1,6-bisphosphate aldolase from Drosophila melanogaster: primary structure analysis, secondary structure prediction, and comparison with vertebrate aldolases.</title>
        <authorList>
            <person name="Malek A.A."/>
            <person name="Hy M."/>
            <person name="Honegger A."/>
            <person name="Rose K."/>
            <person name="Brenner-Holzach O."/>
        </authorList>
    </citation>
    <scope>PROTEIN SEQUENCE OF 2-361 (ISOFORM GAMMA)</scope>
</reference>
<reference key="11">
    <citation type="journal article" date="1982" name="Arch. Biochem. Biophys.">
        <title>Fructose 1,6-bisphosphate aldolase of Drosophila melanogaster: comparative sequence analyses around the substrate-binding lysyl residue.</title>
        <authorList>
            <person name="Brenner-Holzach O."/>
            <person name="Zumsteg C."/>
        </authorList>
    </citation>
    <scope>PRELIMINARY PROTEIN SEQUENCE OF 170-272</scope>
</reference>
<reference key="12">
    <citation type="journal article" date="1995" name="J. Biochem.">
        <title>Drosophila melanogaster aldolase: characterization of the isozymes alpha, beta, and gamma generated from a single gene.</title>
        <authorList>
            <person name="Zhang R."/>
            <person name="Kai T."/>
            <person name="Sugimoto Y."/>
            <person name="Kusakabe T."/>
            <person name="Takasaki Y."/>
            <person name="Koga K."/>
            <person name="Hori K."/>
        </authorList>
    </citation>
    <scope>FUNCTION</scope>
    <scope>CATALYTIC ACTIVITY</scope>
    <scope>BIOPHYSICOCHEMICAL PROPERTIES</scope>
    <scope>SUBUNIT</scope>
    <scope>TISSUE SPECIFICITY</scope>
    <scope>DEVELOPMENTAL STAGE</scope>
</reference>
<reference key="13">
    <citation type="journal article" date="2015" name="Cell Metab.">
        <title>Glial Glycolysis Is Essential for Neuronal Survival in Drosophila.</title>
        <authorList>
            <person name="Volkenhoff A."/>
            <person name="Weiler A."/>
            <person name="Letzel M."/>
            <person name="Stehling M."/>
            <person name="Klaembt C."/>
            <person name="Schirmeier S."/>
        </authorList>
    </citation>
    <scope>FUNCTION</scope>
    <scope>DEVELOPMENTAL STAGE</scope>
    <scope>DISRUPTION PHENOTYPE</scope>
</reference>
<reference key="14">
    <citation type="journal article" date="1991" name="FEBS Lett.">
        <title>The crystal structure of fructose-1,6-bisphosphate aldolase from Drosophila melanogaster at 2.5-A resolution.</title>
        <authorList>
            <person name="Hester G."/>
            <person name="Brenner-Holzach O."/>
            <person name="Rossi F.A."/>
            <person name="Struck-Donatz M."/>
            <person name="Winterhalter K.H."/>
            <person name="Smit J.D.G."/>
            <person name="Piontek K."/>
        </authorList>
    </citation>
    <scope>X-RAY CRYSTALLOGRAPHY (2.5 ANGSTROMS)</scope>
    <scope>ACETYLATION AT THR-2</scope>
</reference>